<evidence type="ECO:0000255" key="1">
    <source>
        <dbReference type="HAMAP-Rule" id="MF_01333"/>
    </source>
</evidence>
<evidence type="ECO:0000305" key="2"/>
<proteinExistence type="inferred from homology"/>
<keyword id="KW-0687">Ribonucleoprotein</keyword>
<keyword id="KW-0689">Ribosomal protein</keyword>
<keyword id="KW-0694">RNA-binding</keyword>
<keyword id="KW-0699">rRNA-binding</keyword>
<keyword id="KW-0820">tRNA-binding</keyword>
<accession>Q824N9</accession>
<name>RL5_CHLCV</name>
<organism>
    <name type="scientific">Chlamydia caviae (strain ATCC VR-813 / DSM 19441 / 03DC25 / GPIC)</name>
    <name type="common">Chlamydophila caviae</name>
    <dbReference type="NCBI Taxonomy" id="227941"/>
    <lineage>
        <taxon>Bacteria</taxon>
        <taxon>Pseudomonadati</taxon>
        <taxon>Chlamydiota</taxon>
        <taxon>Chlamydiia</taxon>
        <taxon>Chlamydiales</taxon>
        <taxon>Chlamydiaceae</taxon>
        <taxon>Chlamydia/Chlamydophila group</taxon>
        <taxon>Chlamydia</taxon>
    </lineage>
</organism>
<comment type="function">
    <text evidence="1">This is one of the proteins that bind and probably mediate the attachment of the 5S RNA into the large ribosomal subunit, where it forms part of the central protuberance. In the 70S ribosome it contacts protein S13 of the 30S subunit (bridge B1b), connecting the 2 subunits; this bridge is implicated in subunit movement. Contacts the P site tRNA; the 5S rRNA and some of its associated proteins might help stabilize positioning of ribosome-bound tRNAs.</text>
</comment>
<comment type="subunit">
    <text evidence="1">Part of the 50S ribosomal subunit; part of the 5S rRNA/L5/L18/L25 subcomplex. Contacts the 5S rRNA and the P site tRNA. Forms a bridge to the 30S subunit in the 70S ribosome.</text>
</comment>
<comment type="similarity">
    <text evidence="1">Belongs to the universal ribosomal protein uL5 family.</text>
</comment>
<gene>
    <name evidence="1" type="primary">rplE</name>
    <name type="ordered locus">CCA_00105</name>
</gene>
<reference key="1">
    <citation type="journal article" date="2003" name="Nucleic Acids Res.">
        <title>Genome sequence of Chlamydophila caviae (Chlamydia psittaci GPIC): examining the role of niche-specific genes in the evolution of the Chlamydiaceae.</title>
        <authorList>
            <person name="Read T.D."/>
            <person name="Myers G.S.A."/>
            <person name="Brunham R.C."/>
            <person name="Nelson W.C."/>
            <person name="Paulsen I.T."/>
            <person name="Heidelberg J.F."/>
            <person name="Holtzapple E.K."/>
            <person name="Khouri H.M."/>
            <person name="Federova N.B."/>
            <person name="Carty H.A."/>
            <person name="Umayam L.A."/>
            <person name="Haft D.H."/>
            <person name="Peterson J.D."/>
            <person name="Beanan M.J."/>
            <person name="White O."/>
            <person name="Salzberg S.L."/>
            <person name="Hsia R.-C."/>
            <person name="McClarty G."/>
            <person name="Rank R.G."/>
            <person name="Bavoil P.M."/>
            <person name="Fraser C.M."/>
        </authorList>
    </citation>
    <scope>NUCLEOTIDE SEQUENCE [LARGE SCALE GENOMIC DNA]</scope>
    <source>
        <strain>ATCC VR-813 / DSM 19441 / 03DC25 / GPIC</strain>
    </source>
</reference>
<protein>
    <recommendedName>
        <fullName evidence="1">Large ribosomal subunit protein uL5</fullName>
    </recommendedName>
    <alternativeName>
        <fullName evidence="2">50S ribosomal protein L5</fullName>
    </alternativeName>
</protein>
<dbReference type="EMBL" id="AE015925">
    <property type="protein sequence ID" value="AAP04857.1"/>
    <property type="molecule type" value="Genomic_DNA"/>
</dbReference>
<dbReference type="RefSeq" id="WP_011006078.1">
    <property type="nucleotide sequence ID" value="NC_003361.3"/>
</dbReference>
<dbReference type="SMR" id="Q824N9"/>
<dbReference type="STRING" id="227941.CCA_00105"/>
<dbReference type="KEGG" id="cca:CCA_00105"/>
<dbReference type="eggNOG" id="COG0094">
    <property type="taxonomic scope" value="Bacteria"/>
</dbReference>
<dbReference type="HOGENOM" id="CLU_061015_2_1_0"/>
<dbReference type="OrthoDB" id="9806626at2"/>
<dbReference type="Proteomes" id="UP000002193">
    <property type="component" value="Chromosome"/>
</dbReference>
<dbReference type="GO" id="GO:1990904">
    <property type="term" value="C:ribonucleoprotein complex"/>
    <property type="evidence" value="ECO:0007669"/>
    <property type="project" value="UniProtKB-KW"/>
</dbReference>
<dbReference type="GO" id="GO:0005840">
    <property type="term" value="C:ribosome"/>
    <property type="evidence" value="ECO:0007669"/>
    <property type="project" value="UniProtKB-KW"/>
</dbReference>
<dbReference type="GO" id="GO:0019843">
    <property type="term" value="F:rRNA binding"/>
    <property type="evidence" value="ECO:0007669"/>
    <property type="project" value="UniProtKB-UniRule"/>
</dbReference>
<dbReference type="GO" id="GO:0003735">
    <property type="term" value="F:structural constituent of ribosome"/>
    <property type="evidence" value="ECO:0007669"/>
    <property type="project" value="InterPro"/>
</dbReference>
<dbReference type="GO" id="GO:0000049">
    <property type="term" value="F:tRNA binding"/>
    <property type="evidence" value="ECO:0007669"/>
    <property type="project" value="UniProtKB-UniRule"/>
</dbReference>
<dbReference type="GO" id="GO:0006412">
    <property type="term" value="P:translation"/>
    <property type="evidence" value="ECO:0007669"/>
    <property type="project" value="UniProtKB-UniRule"/>
</dbReference>
<dbReference type="FunFam" id="3.30.1440.10:FF:000001">
    <property type="entry name" value="50S ribosomal protein L5"/>
    <property type="match status" value="1"/>
</dbReference>
<dbReference type="Gene3D" id="3.30.1440.10">
    <property type="match status" value="1"/>
</dbReference>
<dbReference type="HAMAP" id="MF_01333_B">
    <property type="entry name" value="Ribosomal_uL5_B"/>
    <property type="match status" value="1"/>
</dbReference>
<dbReference type="InterPro" id="IPR002132">
    <property type="entry name" value="Ribosomal_uL5"/>
</dbReference>
<dbReference type="InterPro" id="IPR020930">
    <property type="entry name" value="Ribosomal_uL5_bac-type"/>
</dbReference>
<dbReference type="InterPro" id="IPR031309">
    <property type="entry name" value="Ribosomal_uL5_C"/>
</dbReference>
<dbReference type="InterPro" id="IPR020929">
    <property type="entry name" value="Ribosomal_uL5_CS"/>
</dbReference>
<dbReference type="InterPro" id="IPR022803">
    <property type="entry name" value="Ribosomal_uL5_dom_sf"/>
</dbReference>
<dbReference type="InterPro" id="IPR031310">
    <property type="entry name" value="Ribosomal_uL5_N"/>
</dbReference>
<dbReference type="NCBIfam" id="NF000585">
    <property type="entry name" value="PRK00010.1"/>
    <property type="match status" value="1"/>
</dbReference>
<dbReference type="PANTHER" id="PTHR11994">
    <property type="entry name" value="60S RIBOSOMAL PROTEIN L11-RELATED"/>
    <property type="match status" value="1"/>
</dbReference>
<dbReference type="Pfam" id="PF00281">
    <property type="entry name" value="Ribosomal_L5"/>
    <property type="match status" value="1"/>
</dbReference>
<dbReference type="Pfam" id="PF00673">
    <property type="entry name" value="Ribosomal_L5_C"/>
    <property type="match status" value="1"/>
</dbReference>
<dbReference type="PIRSF" id="PIRSF002161">
    <property type="entry name" value="Ribosomal_L5"/>
    <property type="match status" value="1"/>
</dbReference>
<dbReference type="SUPFAM" id="SSF55282">
    <property type="entry name" value="RL5-like"/>
    <property type="match status" value="1"/>
</dbReference>
<dbReference type="PROSITE" id="PS00358">
    <property type="entry name" value="RIBOSOMAL_L5"/>
    <property type="match status" value="1"/>
</dbReference>
<sequence length="180" mass="20521">MSRLKKLYTEEIRKSLQEKFGYGNTMQIPVLRKIVISMGLAEAAKDKNLFQAHLEELSMISGQKPLVTKARNSIAGFKLREGQGIGAKVTLRGQRMYDFMDRFCNIVSPRIRDFRGFSMKGDGRGCYSLGLDDQQIFPEIDLDRVKRTQGMNITWVTTAQTDVECTTLLELMGLRFKKAQ</sequence>
<feature type="chain" id="PRO_0000124910" description="Large ribosomal subunit protein uL5">
    <location>
        <begin position="1"/>
        <end position="180"/>
    </location>
</feature>